<accession>P38239</accession>
<accession>D6VQ62</accession>
<gene>
    <name type="ordered locus">YBR062C</name>
    <name type="ORF">YBR0528</name>
</gene>
<reference key="1">
    <citation type="journal article" date="1994" name="EMBO J.">
        <title>Complete DNA sequence of yeast chromosome II.</title>
        <authorList>
            <person name="Feldmann H."/>
            <person name="Aigle M."/>
            <person name="Aljinovic G."/>
            <person name="Andre B."/>
            <person name="Baclet M.C."/>
            <person name="Barthe C."/>
            <person name="Baur A."/>
            <person name="Becam A.-M."/>
            <person name="Biteau N."/>
            <person name="Boles E."/>
            <person name="Brandt T."/>
            <person name="Brendel M."/>
            <person name="Brueckner M."/>
            <person name="Bussereau F."/>
            <person name="Christiansen C."/>
            <person name="Contreras R."/>
            <person name="Crouzet M."/>
            <person name="Cziepluch C."/>
            <person name="Demolis N."/>
            <person name="Delaveau T."/>
            <person name="Doignon F."/>
            <person name="Domdey H."/>
            <person name="Duesterhus S."/>
            <person name="Dubois E."/>
            <person name="Dujon B."/>
            <person name="El Bakkoury M."/>
            <person name="Entian K.-D."/>
            <person name="Feuermann M."/>
            <person name="Fiers W."/>
            <person name="Fobo G.M."/>
            <person name="Fritz C."/>
            <person name="Gassenhuber J."/>
            <person name="Glansdorff N."/>
            <person name="Goffeau A."/>
            <person name="Grivell L.A."/>
            <person name="de Haan M."/>
            <person name="Hein C."/>
            <person name="Herbert C.J."/>
            <person name="Hollenberg C.P."/>
            <person name="Holmstroem K."/>
            <person name="Jacq C."/>
            <person name="Jacquet M."/>
            <person name="Jauniaux J.-C."/>
            <person name="Jonniaux J.-L."/>
            <person name="Kallesoee T."/>
            <person name="Kiesau P."/>
            <person name="Kirchrath L."/>
            <person name="Koetter P."/>
            <person name="Korol S."/>
            <person name="Liebl S."/>
            <person name="Logghe M."/>
            <person name="Lohan A.J.E."/>
            <person name="Louis E.J."/>
            <person name="Li Z.Y."/>
            <person name="Maat M.J."/>
            <person name="Mallet L."/>
            <person name="Mannhaupt G."/>
            <person name="Messenguy F."/>
            <person name="Miosga T."/>
            <person name="Molemans F."/>
            <person name="Mueller S."/>
            <person name="Nasr F."/>
            <person name="Obermaier B."/>
            <person name="Perea J."/>
            <person name="Pierard A."/>
            <person name="Piravandi E."/>
            <person name="Pohl F.M."/>
            <person name="Pohl T.M."/>
            <person name="Potier S."/>
            <person name="Proft M."/>
            <person name="Purnelle B."/>
            <person name="Ramezani Rad M."/>
            <person name="Rieger M."/>
            <person name="Rose M."/>
            <person name="Schaaff-Gerstenschlaeger I."/>
            <person name="Scherens B."/>
            <person name="Schwarzlose C."/>
            <person name="Skala J."/>
            <person name="Slonimski P.P."/>
            <person name="Smits P.H.M."/>
            <person name="Souciet J.-L."/>
            <person name="Steensma H.Y."/>
            <person name="Stucka R."/>
            <person name="Urrestarazu L.A."/>
            <person name="van der Aart Q.J.M."/>
            <person name="Van Dyck L."/>
            <person name="Vassarotti A."/>
            <person name="Vetter I."/>
            <person name="Vierendeels F."/>
            <person name="Vissers S."/>
            <person name="Wagner G."/>
            <person name="de Wergifosse P."/>
            <person name="Wolfe K.H."/>
            <person name="Zagulski M."/>
            <person name="Zimmermann F.K."/>
            <person name="Mewes H.-W."/>
            <person name="Kleine K."/>
        </authorList>
    </citation>
    <scope>NUCLEOTIDE SEQUENCE [LARGE SCALE GENOMIC DNA]</scope>
    <source>
        <strain>ATCC 204508 / S288c</strain>
    </source>
</reference>
<reference key="2">
    <citation type="journal article" date="2014" name="G3 (Bethesda)">
        <title>The reference genome sequence of Saccharomyces cerevisiae: Then and now.</title>
        <authorList>
            <person name="Engel S.R."/>
            <person name="Dietrich F.S."/>
            <person name="Fisk D.G."/>
            <person name="Binkley G."/>
            <person name="Balakrishnan R."/>
            <person name="Costanzo M.C."/>
            <person name="Dwight S.S."/>
            <person name="Hitz B.C."/>
            <person name="Karra K."/>
            <person name="Nash R.S."/>
            <person name="Weng S."/>
            <person name="Wong E.D."/>
            <person name="Lloyd P."/>
            <person name="Skrzypek M.S."/>
            <person name="Miyasato S.R."/>
            <person name="Simison M."/>
            <person name="Cherry J.M."/>
        </authorList>
    </citation>
    <scope>GENOME REANNOTATION</scope>
    <source>
        <strain>ATCC 204508 / S288c</strain>
    </source>
</reference>
<reference key="3">
    <citation type="journal article" date="2003" name="Science">
        <title>Finding functional features in Saccharomyces genomes by phylogenetic footprinting.</title>
        <authorList>
            <person name="Cliften P.F."/>
            <person name="Sudarsanam P."/>
            <person name="Desikan A."/>
            <person name="Fulton L."/>
            <person name="Fulton B."/>
            <person name="Majors J."/>
            <person name="Waterston R."/>
            <person name="Cohen B.A."/>
            <person name="Johnston M."/>
        </authorList>
    </citation>
    <scope>REVISION OF GENE MODEL</scope>
</reference>
<reference key="4">
    <citation type="journal article" date="2003" name="Nature">
        <title>Global analysis of protein expression in yeast.</title>
        <authorList>
            <person name="Ghaemmaghami S."/>
            <person name="Huh W.-K."/>
            <person name="Bower K."/>
            <person name="Howson R.W."/>
            <person name="Belle A."/>
            <person name="Dephoure N."/>
            <person name="O'Shea E.K."/>
            <person name="Weissman J.S."/>
        </authorList>
    </citation>
    <scope>LEVEL OF PROTEIN EXPRESSION [LARGE SCALE ANALYSIS]</scope>
</reference>
<reference key="5">
    <citation type="journal article" date="2012" name="Proc. Natl. Acad. Sci. U.S.A.">
        <title>N-terminal acetylome analyses and functional insights of the N-terminal acetyltransferase NatB.</title>
        <authorList>
            <person name="Van Damme P."/>
            <person name="Lasa M."/>
            <person name="Polevoda B."/>
            <person name="Gazquez C."/>
            <person name="Elosegui-Artola A."/>
            <person name="Kim D.S."/>
            <person name="De Juan-Pardo E."/>
            <person name="Demeyer K."/>
            <person name="Hole K."/>
            <person name="Larrea E."/>
            <person name="Timmerman E."/>
            <person name="Prieto J."/>
            <person name="Arnesen T."/>
            <person name="Sherman F."/>
            <person name="Gevaert K."/>
            <person name="Aldabe R."/>
        </authorList>
    </citation>
    <scope>ACETYLATION [LARGE SCALE ANALYSIS] AT SER-2</scope>
    <scope>CLEAVAGE OF INITIATOR METHIONINE [LARGE SCALE ANALYSIS]</scope>
    <scope>IDENTIFICATION BY MASS SPECTROMETRY [LARGE SCALE ANALYSIS]</scope>
</reference>
<evidence type="ECO:0000255" key="1">
    <source>
        <dbReference type="PROSITE-ProRule" id="PRU00175"/>
    </source>
</evidence>
<evidence type="ECO:0000256" key="2">
    <source>
        <dbReference type="SAM" id="MobiDB-lite"/>
    </source>
</evidence>
<evidence type="ECO:0000269" key="3">
    <source>
    </source>
</evidence>
<evidence type="ECO:0000305" key="4"/>
<evidence type="ECO:0007744" key="5">
    <source>
    </source>
</evidence>
<sequence>MSTYEEEHGIQQNSRDYQEVGGTSQEEQRRQVRSQLQGLFQNFGNTSGEGDAHSDSTLLLRLLSQMLPESLQEEWLQEMDKGKSAGCPDTFAASLPRINKKKLKATDNCSICYTNYLEDEYPLVVELPHCHHKFDLECLSVWLSRSTTCPLCRDNVMGHRIINEIDTTEAELEEDWGMYG</sequence>
<comment type="miscellaneous">
    <text evidence="3">Present with 195 molecules/cell in log phase SD medium.</text>
</comment>
<comment type="sequence caution" evidence="4">
    <conflict type="erroneous gene model prediction">
        <sequence resource="EMBL-CDS" id="CAA85005"/>
    </conflict>
</comment>
<comment type="sequence caution" evidence="4">
    <conflict type="frameshift">
        <sequence resource="EMBL-CDS" id="CAA85005"/>
    </conflict>
</comment>
<name>YBR2_YEAST</name>
<feature type="initiator methionine" description="Removed" evidence="5">
    <location>
        <position position="1"/>
    </location>
</feature>
<feature type="chain" id="PRO_0000056335" description="Uncharacterized RING finger protein YBR062C">
    <location>
        <begin position="2"/>
        <end position="180"/>
    </location>
</feature>
<feature type="zinc finger region" description="RING-type" evidence="1">
    <location>
        <begin position="109"/>
        <end position="153"/>
    </location>
</feature>
<feature type="region of interest" description="Disordered" evidence="2">
    <location>
        <begin position="1"/>
        <end position="31"/>
    </location>
</feature>
<feature type="modified residue" description="N-acetylserine" evidence="5">
    <location>
        <position position="2"/>
    </location>
</feature>
<keyword id="KW-0007">Acetylation</keyword>
<keyword id="KW-0479">Metal-binding</keyword>
<keyword id="KW-1185">Reference proteome</keyword>
<keyword id="KW-0862">Zinc</keyword>
<keyword id="KW-0863">Zinc-finger</keyword>
<organism>
    <name type="scientific">Saccharomyces cerevisiae (strain ATCC 204508 / S288c)</name>
    <name type="common">Baker's yeast</name>
    <dbReference type="NCBI Taxonomy" id="559292"/>
    <lineage>
        <taxon>Eukaryota</taxon>
        <taxon>Fungi</taxon>
        <taxon>Dikarya</taxon>
        <taxon>Ascomycota</taxon>
        <taxon>Saccharomycotina</taxon>
        <taxon>Saccharomycetes</taxon>
        <taxon>Saccharomycetales</taxon>
        <taxon>Saccharomycetaceae</taxon>
        <taxon>Saccharomyces</taxon>
    </lineage>
</organism>
<protein>
    <recommendedName>
        <fullName>Uncharacterized RING finger protein YBR062C</fullName>
    </recommendedName>
</protein>
<proteinExistence type="evidence at protein level"/>
<dbReference type="EMBL" id="Z35931">
    <property type="protein sequence ID" value="CAA85005.1"/>
    <property type="status" value="ALT_SEQ"/>
    <property type="molecule type" value="Genomic_DNA"/>
</dbReference>
<dbReference type="EMBL" id="BK006936">
    <property type="protein sequence ID" value="DAA07182.1"/>
    <property type="molecule type" value="Genomic_DNA"/>
</dbReference>
<dbReference type="PIR" id="S45920">
    <property type="entry name" value="S45920"/>
</dbReference>
<dbReference type="RefSeq" id="NP_009618.2">
    <property type="nucleotide sequence ID" value="NM_001178410.1"/>
</dbReference>
<dbReference type="SMR" id="P38239"/>
<dbReference type="BioGRID" id="32766">
    <property type="interactions" value="43"/>
</dbReference>
<dbReference type="FunCoup" id="P38239">
    <property type="interactions" value="28"/>
</dbReference>
<dbReference type="MINT" id="P38239"/>
<dbReference type="STRING" id="4932.YBR062C"/>
<dbReference type="iPTMnet" id="P38239"/>
<dbReference type="PaxDb" id="4932-YBR062C"/>
<dbReference type="PeptideAtlas" id="P38239"/>
<dbReference type="EnsemblFungi" id="YBR062C_mRNA">
    <property type="protein sequence ID" value="YBR062C"/>
    <property type="gene ID" value="YBR062C"/>
</dbReference>
<dbReference type="GeneID" id="852354"/>
<dbReference type="KEGG" id="sce:YBR062C"/>
<dbReference type="AGR" id="SGD:S000000266"/>
<dbReference type="SGD" id="S000000266">
    <property type="gene designation" value="YBR062C"/>
</dbReference>
<dbReference type="VEuPathDB" id="FungiDB:YBR062C"/>
<dbReference type="eggNOG" id="KOG0800">
    <property type="taxonomic scope" value="Eukaryota"/>
</dbReference>
<dbReference type="HOGENOM" id="CLU_076142_1_0_1"/>
<dbReference type="InParanoid" id="P38239"/>
<dbReference type="OMA" id="EEDWGMY"/>
<dbReference type="OrthoDB" id="8062037at2759"/>
<dbReference type="BioCyc" id="YEAST:G3O-29032-MONOMER"/>
<dbReference type="BioGRID-ORCS" id="852354">
    <property type="hits" value="2 hits in 10 CRISPR screens"/>
</dbReference>
<dbReference type="PRO" id="PR:P38239"/>
<dbReference type="Proteomes" id="UP000002311">
    <property type="component" value="Chromosome II"/>
</dbReference>
<dbReference type="RNAct" id="P38239">
    <property type="molecule type" value="protein"/>
</dbReference>
<dbReference type="GO" id="GO:0005737">
    <property type="term" value="C:cytoplasm"/>
    <property type="evidence" value="ECO:0000318"/>
    <property type="project" value="GO_Central"/>
</dbReference>
<dbReference type="GO" id="GO:0061630">
    <property type="term" value="F:ubiquitin protein ligase activity"/>
    <property type="evidence" value="ECO:0000318"/>
    <property type="project" value="GO_Central"/>
</dbReference>
<dbReference type="GO" id="GO:0008270">
    <property type="term" value="F:zinc ion binding"/>
    <property type="evidence" value="ECO:0007669"/>
    <property type="project" value="UniProtKB-KW"/>
</dbReference>
<dbReference type="GO" id="GO:0016567">
    <property type="term" value="P:protein ubiquitination"/>
    <property type="evidence" value="ECO:0000318"/>
    <property type="project" value="GO_Central"/>
</dbReference>
<dbReference type="Gene3D" id="3.30.40.10">
    <property type="entry name" value="Zinc/RING finger domain, C3HC4 (zinc finger)"/>
    <property type="match status" value="1"/>
</dbReference>
<dbReference type="InterPro" id="IPR053238">
    <property type="entry name" value="RING-H2_zinc_finger"/>
</dbReference>
<dbReference type="InterPro" id="IPR001841">
    <property type="entry name" value="Znf_RING"/>
</dbReference>
<dbReference type="InterPro" id="IPR013083">
    <property type="entry name" value="Znf_RING/FYVE/PHD"/>
</dbReference>
<dbReference type="PANTHER" id="PTHR14155:SF627">
    <property type="entry name" value="OS06G0192800 PROTEIN"/>
    <property type="match status" value="1"/>
</dbReference>
<dbReference type="PANTHER" id="PTHR14155">
    <property type="entry name" value="RING FINGER DOMAIN-CONTAINING"/>
    <property type="match status" value="1"/>
</dbReference>
<dbReference type="Pfam" id="PF13639">
    <property type="entry name" value="zf-RING_2"/>
    <property type="match status" value="1"/>
</dbReference>
<dbReference type="SMART" id="SM00184">
    <property type="entry name" value="RING"/>
    <property type="match status" value="1"/>
</dbReference>
<dbReference type="SUPFAM" id="SSF57850">
    <property type="entry name" value="RING/U-box"/>
    <property type="match status" value="1"/>
</dbReference>
<dbReference type="PROSITE" id="PS50089">
    <property type="entry name" value="ZF_RING_2"/>
    <property type="match status" value="1"/>
</dbReference>